<comment type="function">
    <text evidence="1">This protein binds specifically to 23S rRNA; its binding is stimulated by other ribosomal proteins, e.g. L4, L17, and L20. It is important during the early stages of 50S assembly. It makes multiple contacts with different domains of the 23S rRNA in the assembled 50S subunit and ribosome (By similarity).</text>
</comment>
<comment type="function">
    <text evidence="1">The globular domain of the protein is located near the polypeptide exit tunnel on the outside of the subunit, while an extended beta-hairpin is found that lines the wall of the exit tunnel in the center of the 70S ribosome.</text>
</comment>
<comment type="subunit">
    <text evidence="1">Part of the 50S ribosomal subunit.</text>
</comment>
<comment type="similarity">
    <text evidence="1">Belongs to the universal ribosomal protein uL22 family.</text>
</comment>
<proteinExistence type="inferred from homology"/>
<dbReference type="EMBL" id="CP000285">
    <property type="protein sequence ID" value="ABE57788.1"/>
    <property type="molecule type" value="Genomic_DNA"/>
</dbReference>
<dbReference type="RefSeq" id="WP_011505734.1">
    <property type="nucleotide sequence ID" value="NC_007963.1"/>
</dbReference>
<dbReference type="SMR" id="Q1R0H0"/>
<dbReference type="STRING" id="290398.Csal_0426"/>
<dbReference type="GeneID" id="95333179"/>
<dbReference type="KEGG" id="csa:Csal_0426"/>
<dbReference type="eggNOG" id="COG0091">
    <property type="taxonomic scope" value="Bacteria"/>
</dbReference>
<dbReference type="HOGENOM" id="CLU_083987_3_3_6"/>
<dbReference type="OrthoDB" id="9805969at2"/>
<dbReference type="Proteomes" id="UP000000239">
    <property type="component" value="Chromosome"/>
</dbReference>
<dbReference type="GO" id="GO:0022625">
    <property type="term" value="C:cytosolic large ribosomal subunit"/>
    <property type="evidence" value="ECO:0007669"/>
    <property type="project" value="TreeGrafter"/>
</dbReference>
<dbReference type="GO" id="GO:0019843">
    <property type="term" value="F:rRNA binding"/>
    <property type="evidence" value="ECO:0007669"/>
    <property type="project" value="UniProtKB-UniRule"/>
</dbReference>
<dbReference type="GO" id="GO:0003735">
    <property type="term" value="F:structural constituent of ribosome"/>
    <property type="evidence" value="ECO:0007669"/>
    <property type="project" value="InterPro"/>
</dbReference>
<dbReference type="GO" id="GO:0006412">
    <property type="term" value="P:translation"/>
    <property type="evidence" value="ECO:0007669"/>
    <property type="project" value="UniProtKB-UniRule"/>
</dbReference>
<dbReference type="CDD" id="cd00336">
    <property type="entry name" value="Ribosomal_L22"/>
    <property type="match status" value="1"/>
</dbReference>
<dbReference type="FunFam" id="3.90.470.10:FF:000001">
    <property type="entry name" value="50S ribosomal protein L22"/>
    <property type="match status" value="1"/>
</dbReference>
<dbReference type="Gene3D" id="3.90.470.10">
    <property type="entry name" value="Ribosomal protein L22/L17"/>
    <property type="match status" value="1"/>
</dbReference>
<dbReference type="HAMAP" id="MF_01331_B">
    <property type="entry name" value="Ribosomal_uL22_B"/>
    <property type="match status" value="1"/>
</dbReference>
<dbReference type="InterPro" id="IPR001063">
    <property type="entry name" value="Ribosomal_uL22"/>
</dbReference>
<dbReference type="InterPro" id="IPR005727">
    <property type="entry name" value="Ribosomal_uL22_bac/chlpt-type"/>
</dbReference>
<dbReference type="InterPro" id="IPR047867">
    <property type="entry name" value="Ribosomal_uL22_bac/org-type"/>
</dbReference>
<dbReference type="InterPro" id="IPR018260">
    <property type="entry name" value="Ribosomal_uL22_CS"/>
</dbReference>
<dbReference type="InterPro" id="IPR036394">
    <property type="entry name" value="Ribosomal_uL22_sf"/>
</dbReference>
<dbReference type="NCBIfam" id="TIGR01044">
    <property type="entry name" value="rplV_bact"/>
    <property type="match status" value="1"/>
</dbReference>
<dbReference type="PANTHER" id="PTHR13501">
    <property type="entry name" value="CHLOROPLAST 50S RIBOSOMAL PROTEIN L22-RELATED"/>
    <property type="match status" value="1"/>
</dbReference>
<dbReference type="PANTHER" id="PTHR13501:SF8">
    <property type="entry name" value="LARGE RIBOSOMAL SUBUNIT PROTEIN UL22M"/>
    <property type="match status" value="1"/>
</dbReference>
<dbReference type="Pfam" id="PF00237">
    <property type="entry name" value="Ribosomal_L22"/>
    <property type="match status" value="1"/>
</dbReference>
<dbReference type="SUPFAM" id="SSF54843">
    <property type="entry name" value="Ribosomal protein L22"/>
    <property type="match status" value="1"/>
</dbReference>
<dbReference type="PROSITE" id="PS00464">
    <property type="entry name" value="RIBOSOMAL_L22"/>
    <property type="match status" value="1"/>
</dbReference>
<organism>
    <name type="scientific">Chromohalobacter salexigens (strain ATCC BAA-138 / DSM 3043 / CIP 106854 / NCIMB 13768 / 1H11)</name>
    <dbReference type="NCBI Taxonomy" id="290398"/>
    <lineage>
        <taxon>Bacteria</taxon>
        <taxon>Pseudomonadati</taxon>
        <taxon>Pseudomonadota</taxon>
        <taxon>Gammaproteobacteria</taxon>
        <taxon>Oceanospirillales</taxon>
        <taxon>Halomonadaceae</taxon>
        <taxon>Chromohalobacter</taxon>
    </lineage>
</organism>
<protein>
    <recommendedName>
        <fullName evidence="1">Large ribosomal subunit protein uL22</fullName>
    </recommendedName>
    <alternativeName>
        <fullName evidence="2">50S ribosomal protein L22</fullName>
    </alternativeName>
</protein>
<keyword id="KW-1185">Reference proteome</keyword>
<keyword id="KW-0687">Ribonucleoprotein</keyword>
<keyword id="KW-0689">Ribosomal protein</keyword>
<keyword id="KW-0694">RNA-binding</keyword>
<keyword id="KW-0699">rRNA-binding</keyword>
<feature type="chain" id="PRO_1000052557" description="Large ribosomal subunit protein uL22">
    <location>
        <begin position="1"/>
        <end position="110"/>
    </location>
</feature>
<sequence>MEVTAKLRGARLSAQKARLVADLVRGKPVAEALDVLAYSPKKAAKVVKKVLQSAIANAEENNGMDIDELRVSTICVDEGMTLKRIQPRAKGRADRILKRTCHITVKVAEK</sequence>
<name>RL22_CHRSD</name>
<reference key="1">
    <citation type="journal article" date="2011" name="Stand. Genomic Sci.">
        <title>Complete genome sequence of the halophilic and highly halotolerant Chromohalobacter salexigens type strain (1H11(T)).</title>
        <authorList>
            <person name="Copeland A."/>
            <person name="O'Connor K."/>
            <person name="Lucas S."/>
            <person name="Lapidus A."/>
            <person name="Berry K.W."/>
            <person name="Detter J.C."/>
            <person name="Del Rio T.G."/>
            <person name="Hammon N."/>
            <person name="Dalin E."/>
            <person name="Tice H."/>
            <person name="Pitluck S."/>
            <person name="Bruce D."/>
            <person name="Goodwin L."/>
            <person name="Han C."/>
            <person name="Tapia R."/>
            <person name="Saunders E."/>
            <person name="Schmutz J."/>
            <person name="Brettin T."/>
            <person name="Larimer F."/>
            <person name="Land M."/>
            <person name="Hauser L."/>
            <person name="Vargas C."/>
            <person name="Nieto J.J."/>
            <person name="Kyrpides N.C."/>
            <person name="Ivanova N."/>
            <person name="Goker M."/>
            <person name="Klenk H.P."/>
            <person name="Csonka L.N."/>
            <person name="Woyke T."/>
        </authorList>
    </citation>
    <scope>NUCLEOTIDE SEQUENCE [LARGE SCALE GENOMIC DNA]</scope>
    <source>
        <strain>ATCC BAA-138 / DSM 3043 / CIP 106854 / NCIMB 13768 / 1H11</strain>
    </source>
</reference>
<accession>Q1R0H0</accession>
<gene>
    <name evidence="1" type="primary">rplV</name>
    <name type="ordered locus">Csal_0426</name>
</gene>
<evidence type="ECO:0000255" key="1">
    <source>
        <dbReference type="HAMAP-Rule" id="MF_01331"/>
    </source>
</evidence>
<evidence type="ECO:0000305" key="2"/>